<proteinExistence type="inferred from homology"/>
<evidence type="ECO:0000255" key="1">
    <source>
        <dbReference type="HAMAP-Rule" id="MF_00434"/>
    </source>
</evidence>
<evidence type="ECO:0000305" key="2"/>
<dbReference type="EC" id="4.2.1.96" evidence="1"/>
<dbReference type="EMBL" id="BX640434">
    <property type="protein sequence ID" value="CAE38955.1"/>
    <property type="status" value="ALT_INIT"/>
    <property type="molecule type" value="Genomic_DNA"/>
</dbReference>
<dbReference type="SMR" id="Q7W4J0"/>
<dbReference type="KEGG" id="bpa:BPP3671"/>
<dbReference type="HOGENOM" id="CLU_081974_3_0_4"/>
<dbReference type="Proteomes" id="UP000001421">
    <property type="component" value="Chromosome"/>
</dbReference>
<dbReference type="GO" id="GO:0008124">
    <property type="term" value="F:4-alpha-hydroxytetrahydrobiopterin dehydratase activity"/>
    <property type="evidence" value="ECO:0007669"/>
    <property type="project" value="UniProtKB-UniRule"/>
</dbReference>
<dbReference type="GO" id="GO:0006729">
    <property type="term" value="P:tetrahydrobiopterin biosynthetic process"/>
    <property type="evidence" value="ECO:0007669"/>
    <property type="project" value="InterPro"/>
</dbReference>
<dbReference type="CDD" id="cd00914">
    <property type="entry name" value="PCD_DCoH_subfamily_b"/>
    <property type="match status" value="1"/>
</dbReference>
<dbReference type="Gene3D" id="3.30.1360.20">
    <property type="entry name" value="Transcriptional coactivator/pterin dehydratase"/>
    <property type="match status" value="1"/>
</dbReference>
<dbReference type="HAMAP" id="MF_00434">
    <property type="entry name" value="Pterin_4_alpha"/>
    <property type="match status" value="1"/>
</dbReference>
<dbReference type="InterPro" id="IPR036428">
    <property type="entry name" value="PCD_sf"/>
</dbReference>
<dbReference type="InterPro" id="IPR001533">
    <property type="entry name" value="Pterin_deHydtase"/>
</dbReference>
<dbReference type="NCBIfam" id="NF002017">
    <property type="entry name" value="PRK00823.1-2"/>
    <property type="match status" value="1"/>
</dbReference>
<dbReference type="NCBIfam" id="NF002018">
    <property type="entry name" value="PRK00823.1-3"/>
    <property type="match status" value="1"/>
</dbReference>
<dbReference type="NCBIfam" id="NF002020">
    <property type="entry name" value="PRK00823.1-5"/>
    <property type="match status" value="1"/>
</dbReference>
<dbReference type="PANTHER" id="PTHR12599">
    <property type="entry name" value="PTERIN-4-ALPHA-CARBINOLAMINE DEHYDRATASE"/>
    <property type="match status" value="1"/>
</dbReference>
<dbReference type="PANTHER" id="PTHR12599:SF0">
    <property type="entry name" value="PTERIN-4-ALPHA-CARBINOLAMINE DEHYDRATASE"/>
    <property type="match status" value="1"/>
</dbReference>
<dbReference type="Pfam" id="PF01329">
    <property type="entry name" value="Pterin_4a"/>
    <property type="match status" value="1"/>
</dbReference>
<dbReference type="SUPFAM" id="SSF55248">
    <property type="entry name" value="PCD-like"/>
    <property type="match status" value="1"/>
</dbReference>
<gene>
    <name type="ordered locus">BPP3671</name>
</gene>
<protein>
    <recommendedName>
        <fullName evidence="1">Putative pterin-4-alpha-carbinolamine dehydratase</fullName>
        <shortName evidence="1">PHS</shortName>
        <ecNumber evidence="1">4.2.1.96</ecNumber>
    </recommendedName>
    <alternativeName>
        <fullName evidence="1">4-alpha-hydroxy-tetrahydropterin dehydratase</fullName>
    </alternativeName>
    <alternativeName>
        <fullName evidence="1">Pterin carbinolamine dehydratase</fullName>
        <shortName evidence="1">PCD</shortName>
    </alternativeName>
</protein>
<feature type="chain" id="PRO_0000063073" description="Putative pterin-4-alpha-carbinolamine dehydratase">
    <location>
        <begin position="1"/>
        <end position="113"/>
    </location>
</feature>
<sequence>MSTEFPMRIGAEVALPALQGWNAAAGRDAIEKRYRFDNFNAAFGFMARVAMFAEKMDHHPEWRNVYNRVDVTLTTHDAGGVTELDVRMAQFMDEAAGRLGATGLPARADQPRT</sequence>
<keyword id="KW-0456">Lyase</keyword>
<organism>
    <name type="scientific">Bordetella parapertussis (strain 12822 / ATCC BAA-587 / NCTC 13253)</name>
    <dbReference type="NCBI Taxonomy" id="257311"/>
    <lineage>
        <taxon>Bacteria</taxon>
        <taxon>Pseudomonadati</taxon>
        <taxon>Pseudomonadota</taxon>
        <taxon>Betaproteobacteria</taxon>
        <taxon>Burkholderiales</taxon>
        <taxon>Alcaligenaceae</taxon>
        <taxon>Bordetella</taxon>
    </lineage>
</organism>
<accession>Q7W4J0</accession>
<name>PHS_BORPA</name>
<reference key="1">
    <citation type="journal article" date="2003" name="Nat. Genet.">
        <title>Comparative analysis of the genome sequences of Bordetella pertussis, Bordetella parapertussis and Bordetella bronchiseptica.</title>
        <authorList>
            <person name="Parkhill J."/>
            <person name="Sebaihia M."/>
            <person name="Preston A."/>
            <person name="Murphy L.D."/>
            <person name="Thomson N.R."/>
            <person name="Harris D.E."/>
            <person name="Holden M.T.G."/>
            <person name="Churcher C.M."/>
            <person name="Bentley S.D."/>
            <person name="Mungall K.L."/>
            <person name="Cerdeno-Tarraga A.-M."/>
            <person name="Temple L."/>
            <person name="James K.D."/>
            <person name="Harris B."/>
            <person name="Quail M.A."/>
            <person name="Achtman M."/>
            <person name="Atkin R."/>
            <person name="Baker S."/>
            <person name="Basham D."/>
            <person name="Bason N."/>
            <person name="Cherevach I."/>
            <person name="Chillingworth T."/>
            <person name="Collins M."/>
            <person name="Cronin A."/>
            <person name="Davis P."/>
            <person name="Doggett J."/>
            <person name="Feltwell T."/>
            <person name="Goble A."/>
            <person name="Hamlin N."/>
            <person name="Hauser H."/>
            <person name="Holroyd S."/>
            <person name="Jagels K."/>
            <person name="Leather S."/>
            <person name="Moule S."/>
            <person name="Norberczak H."/>
            <person name="O'Neil S."/>
            <person name="Ormond D."/>
            <person name="Price C."/>
            <person name="Rabbinowitsch E."/>
            <person name="Rutter S."/>
            <person name="Sanders M."/>
            <person name="Saunders D."/>
            <person name="Seeger K."/>
            <person name="Sharp S."/>
            <person name="Simmonds M."/>
            <person name="Skelton J."/>
            <person name="Squares R."/>
            <person name="Squares S."/>
            <person name="Stevens K."/>
            <person name="Unwin L."/>
            <person name="Whitehead S."/>
            <person name="Barrell B.G."/>
            <person name="Maskell D.J."/>
        </authorList>
    </citation>
    <scope>NUCLEOTIDE SEQUENCE [LARGE SCALE GENOMIC DNA]</scope>
    <source>
        <strain>12822 / ATCC BAA-587 / NCTC 13253</strain>
    </source>
</reference>
<comment type="catalytic activity">
    <reaction evidence="1">
        <text>(4aS,6R)-4a-hydroxy-L-erythro-5,6,7,8-tetrahydrobiopterin = (6R)-L-erythro-6,7-dihydrobiopterin + H2O</text>
        <dbReference type="Rhea" id="RHEA:11920"/>
        <dbReference type="ChEBI" id="CHEBI:15377"/>
        <dbReference type="ChEBI" id="CHEBI:15642"/>
        <dbReference type="ChEBI" id="CHEBI:43120"/>
        <dbReference type="EC" id="4.2.1.96"/>
    </reaction>
</comment>
<comment type="similarity">
    <text evidence="1">Belongs to the pterin-4-alpha-carbinolamine dehydratase family.</text>
</comment>
<comment type="sequence caution" evidence="2">
    <conflict type="erroneous initiation">
        <sequence resource="EMBL-CDS" id="CAE38955"/>
    </conflict>
</comment>